<organism>
    <name type="scientific">Alkaliphilus metalliredigens (strain QYMF)</name>
    <dbReference type="NCBI Taxonomy" id="293826"/>
    <lineage>
        <taxon>Bacteria</taxon>
        <taxon>Bacillati</taxon>
        <taxon>Bacillota</taxon>
        <taxon>Clostridia</taxon>
        <taxon>Peptostreptococcales</taxon>
        <taxon>Natronincolaceae</taxon>
        <taxon>Alkaliphilus</taxon>
    </lineage>
</organism>
<accession>A6TLX6</accession>
<comment type="catalytic activity">
    <reaction evidence="1">
        <text>beta-D-fructose 1,6-bisphosphate + H2O = beta-D-fructose 6-phosphate + phosphate</text>
        <dbReference type="Rhea" id="RHEA:11064"/>
        <dbReference type="ChEBI" id="CHEBI:15377"/>
        <dbReference type="ChEBI" id="CHEBI:32966"/>
        <dbReference type="ChEBI" id="CHEBI:43474"/>
        <dbReference type="ChEBI" id="CHEBI:57634"/>
        <dbReference type="EC" id="3.1.3.11"/>
    </reaction>
</comment>
<comment type="cofactor">
    <cofactor evidence="1">
        <name>Mn(2+)</name>
        <dbReference type="ChEBI" id="CHEBI:29035"/>
    </cofactor>
</comment>
<comment type="pathway">
    <text evidence="1">Carbohydrate biosynthesis; gluconeogenesis.</text>
</comment>
<comment type="similarity">
    <text evidence="1">Belongs to the FBPase class 3 family.</text>
</comment>
<sequence>MVYSNNDVIQDFGSDLRYLKLLSKEFPTIASASTEIINLQAILNLPKGTEHFLSDIHGEYESFNHVLKNGSGNIKRKIIEVFGDLLSETEIKSLATLIYYPEQKLDLIHKKEENIEEWYKVTISRLVEVCRKAAFKYTRMKVRKALPKDFAYIIEELMHRGPKELDKEEYYNEIIETIIRIGRADEFIIEMSKLIQRLVIDRLHIVGDIFDRGPGPDIVMDTLLNYHSVDIQWGNHDVLWMGSAAGSEACIATLIRICATYSNLNTIEDGYGINLLPLATFALDFYKDDDCTAFKPKIKSDIIYTENDLKLIAKMHKAISIIQFKLEGEIINRRPHFSMEDRLLLNKINYEDGTVDIDGKIYKLKDSNFPTINPKNPYKLTIEEKELMEKLKSSFLNSEKLQRHVRFLFSNGSMYLKFNSNLMYHGGIPMNEDGSFKKVTIDSSGISYSGKAYFDRLEILVREAYFRKNNPIAKQHGMDITWYLWTGPDSPLFGKDKMTTFERYFINDKETHVEKKDPYFKLEDNEKMCRIIFEEFGLNPDVSHIINGHVPVKLKEGESPIRANGKLLVIDGGFSRTYQGTTGIAGYTLIYNSYGLLLVSHDPFESTQKAIEEEKDIHSTTMVLEKEVERKRVRDTDDGEKLKFQVKDLEMLLDAYRSGLIKEQR</sequence>
<proteinExistence type="inferred from homology"/>
<name>F16PC_ALKMQ</name>
<keyword id="KW-0119">Carbohydrate metabolism</keyword>
<keyword id="KW-0378">Hydrolase</keyword>
<keyword id="KW-0464">Manganese</keyword>
<keyword id="KW-1185">Reference proteome</keyword>
<evidence type="ECO:0000255" key="1">
    <source>
        <dbReference type="HAMAP-Rule" id="MF_01854"/>
    </source>
</evidence>
<reference key="1">
    <citation type="journal article" date="2016" name="Genome Announc.">
        <title>Complete genome sequence of Alkaliphilus metalliredigens strain QYMF, an alkaliphilic and metal-reducing bacterium isolated from borax-contaminated leachate ponds.</title>
        <authorList>
            <person name="Hwang C."/>
            <person name="Copeland A."/>
            <person name="Lucas S."/>
            <person name="Lapidus A."/>
            <person name="Barry K."/>
            <person name="Detter J.C."/>
            <person name="Glavina Del Rio T."/>
            <person name="Hammon N."/>
            <person name="Israni S."/>
            <person name="Dalin E."/>
            <person name="Tice H."/>
            <person name="Pitluck S."/>
            <person name="Chertkov O."/>
            <person name="Brettin T."/>
            <person name="Bruce D."/>
            <person name="Han C."/>
            <person name="Schmutz J."/>
            <person name="Larimer F."/>
            <person name="Land M.L."/>
            <person name="Hauser L."/>
            <person name="Kyrpides N."/>
            <person name="Mikhailova N."/>
            <person name="Ye Q."/>
            <person name="Zhou J."/>
            <person name="Richardson P."/>
            <person name="Fields M.W."/>
        </authorList>
    </citation>
    <scope>NUCLEOTIDE SEQUENCE [LARGE SCALE GENOMIC DNA]</scope>
    <source>
        <strain>QYMF</strain>
    </source>
</reference>
<feature type="chain" id="PRO_0000363071" description="Fructose-1,6-bisphosphatase class 3">
    <location>
        <begin position="1"/>
        <end position="665"/>
    </location>
</feature>
<gene>
    <name evidence="1" type="primary">fbp</name>
    <name type="ordered locus">Amet_0977</name>
</gene>
<dbReference type="EC" id="3.1.3.11" evidence="1"/>
<dbReference type="EMBL" id="CP000724">
    <property type="protein sequence ID" value="ABR47194.1"/>
    <property type="molecule type" value="Genomic_DNA"/>
</dbReference>
<dbReference type="RefSeq" id="WP_012062236.1">
    <property type="nucleotide sequence ID" value="NC_009633.1"/>
</dbReference>
<dbReference type="STRING" id="293826.Amet_0977"/>
<dbReference type="KEGG" id="amt:Amet_0977"/>
<dbReference type="eggNOG" id="COG3855">
    <property type="taxonomic scope" value="Bacteria"/>
</dbReference>
<dbReference type="HOGENOM" id="CLU_028392_2_0_9"/>
<dbReference type="OrthoDB" id="9779903at2"/>
<dbReference type="UniPathway" id="UPA00138"/>
<dbReference type="Proteomes" id="UP000001572">
    <property type="component" value="Chromosome"/>
</dbReference>
<dbReference type="GO" id="GO:0042132">
    <property type="term" value="F:fructose 1,6-bisphosphate 1-phosphatase activity"/>
    <property type="evidence" value="ECO:0007669"/>
    <property type="project" value="UniProtKB-UniRule"/>
</dbReference>
<dbReference type="GO" id="GO:0006094">
    <property type="term" value="P:gluconeogenesis"/>
    <property type="evidence" value="ECO:0007669"/>
    <property type="project" value="UniProtKB-UniRule"/>
</dbReference>
<dbReference type="CDD" id="cd00838">
    <property type="entry name" value="MPP_superfamily"/>
    <property type="match status" value="1"/>
</dbReference>
<dbReference type="Gene3D" id="3.60.21.10">
    <property type="match status" value="1"/>
</dbReference>
<dbReference type="HAMAP" id="MF_01854">
    <property type="entry name" value="FBPase_class3"/>
    <property type="match status" value="1"/>
</dbReference>
<dbReference type="InterPro" id="IPR009164">
    <property type="entry name" value="FBPtase_class3"/>
</dbReference>
<dbReference type="InterPro" id="IPR029052">
    <property type="entry name" value="Metallo-depent_PP-like"/>
</dbReference>
<dbReference type="Pfam" id="PF06874">
    <property type="entry name" value="FBPase_2"/>
    <property type="match status" value="1"/>
</dbReference>
<dbReference type="PIRSF" id="PIRSF000906">
    <property type="entry name" value="FBPtase_Bacill"/>
    <property type="match status" value="1"/>
</dbReference>
<dbReference type="SUPFAM" id="SSF56300">
    <property type="entry name" value="Metallo-dependent phosphatases"/>
    <property type="match status" value="1"/>
</dbReference>
<protein>
    <recommendedName>
        <fullName evidence="1">Fructose-1,6-bisphosphatase class 3</fullName>
        <shortName evidence="1">FBPase class 3</shortName>
        <ecNumber evidence="1">3.1.3.11</ecNumber>
    </recommendedName>
    <alternativeName>
        <fullName evidence="1">D-fructose-1,6-bisphosphate 1-phosphohydrolase class 3</fullName>
    </alternativeName>
</protein>